<name>SERK4_ORYSJ</name>
<feature type="signal peptide" evidence="1">
    <location>
        <begin position="1"/>
        <end position="21"/>
    </location>
</feature>
<feature type="chain" id="PRO_5010506967" description="LRR receptor kinase SERK2" evidence="1">
    <location>
        <begin position="22"/>
        <end position="607"/>
    </location>
</feature>
<feature type="topological domain" description="Extracellular" evidence="6">
    <location>
        <begin position="22"/>
        <end position="219"/>
    </location>
</feature>
<feature type="transmembrane region" description="Helical" evidence="1">
    <location>
        <begin position="220"/>
        <end position="240"/>
    </location>
</feature>
<feature type="topological domain" description="Cytoplasmic" evidence="6">
    <location>
        <begin position="241"/>
        <end position="607"/>
    </location>
</feature>
<feature type="repeat" description="LRR 1" evidence="1">
    <location>
        <begin position="87"/>
        <end position="110"/>
    </location>
</feature>
<feature type="repeat" description="LRR 2" evidence="1">
    <location>
        <begin position="111"/>
        <end position="135"/>
    </location>
</feature>
<feature type="repeat" description="LRR 3" evidence="1">
    <location>
        <begin position="136"/>
        <end position="159"/>
    </location>
</feature>
<feature type="repeat" description="LRR 4" evidence="1">
    <location>
        <begin position="160"/>
        <end position="183"/>
    </location>
</feature>
<feature type="domain" description="Protein kinase" evidence="2">
    <location>
        <begin position="284"/>
        <end position="563"/>
    </location>
</feature>
<feature type="active site" description="Proton acceptor" evidence="2">
    <location>
        <position position="411"/>
    </location>
</feature>
<feature type="binding site" evidence="2">
    <location>
        <begin position="290"/>
        <end position="298"/>
    </location>
    <ligand>
        <name>ATP</name>
        <dbReference type="ChEBI" id="CHEBI:30616"/>
    </ligand>
</feature>
<feature type="binding site" evidence="2">
    <location>
        <position position="312"/>
    </location>
    <ligand>
        <name>ATP</name>
        <dbReference type="ChEBI" id="CHEBI:30616"/>
    </ligand>
</feature>
<feature type="glycosylation site" description="N-linked (GlcNAc...) asparagine" evidence="3">
    <location>
        <position position="36"/>
    </location>
</feature>
<feature type="glycosylation site" description="N-linked (GlcNAc...) asparagine" evidence="3">
    <location>
        <position position="110"/>
    </location>
</feature>
<feature type="glycosylation site" description="N-linked (GlcNAc...) asparagine" evidence="3">
    <location>
        <position position="149"/>
    </location>
</feature>
<feature type="glycosylation site" description="N-linked (GlcNAc...) asparagine" evidence="3">
    <location>
        <position position="171"/>
    </location>
</feature>
<feature type="glycosylation site" description="N-linked (GlcNAc...) asparagine" evidence="3">
    <location>
        <position position="187"/>
    </location>
</feature>
<feature type="glycosylation site" description="N-linked (GlcNAc...) asparagine" evidence="3">
    <location>
        <position position="206"/>
    </location>
</feature>
<evidence type="ECO:0000255" key="1"/>
<evidence type="ECO:0000255" key="2">
    <source>
        <dbReference type="PROSITE-ProRule" id="PRU00159"/>
    </source>
</evidence>
<evidence type="ECO:0000255" key="3">
    <source>
        <dbReference type="PROSITE-ProRule" id="PRU00498"/>
    </source>
</evidence>
<evidence type="ECO:0000269" key="4">
    <source>
    </source>
</evidence>
<evidence type="ECO:0000303" key="5">
    <source>
    </source>
</evidence>
<evidence type="ECO:0000305" key="6"/>
<evidence type="ECO:0000312" key="7">
    <source>
        <dbReference type="EMBL" id="BAD22198.1"/>
    </source>
</evidence>
<evidence type="ECO:0000312" key="8">
    <source>
        <dbReference type="EMBL" id="BAF08482.1"/>
    </source>
</evidence>
<evidence type="ECO:0000312" key="9">
    <source>
        <dbReference type="EMBL" id="EAZ22603.1"/>
    </source>
</evidence>
<accession>Q6K4T4</accession>
<sequence>MRELRVAVLIIAVSLPSFSASDRQGDALYDMKQKLNVTGNQLSDWNQNQVNPCTWNSVICDNNNNVIQVTLAARGFAGVLSPRIGELKYLTVLSLAGNRISGGIPEQFGNLSSLTSLDLEDNLLVGEIPASLGQLSKLQLLILSDNNFNGSIPDSLAKISSLTDIRLAYNNLSGQIPGPLFQVARYNFSGNHLNCGTNFPHSCSTNMSYQSGSHSSKIGIVLGTVGGVIGLLIVAALFLFCKGRRKSHLREVFVDVAGEDDRRIAFGQLKRFAWRELQIATDNFSERNVLGQGGFGKVYKGVLPDGTKIAVKRLTDYESPGGEAAFLREVELISVAVHRNLLKLIGFCTTQTERLLVYPFMQNLSVAYRLRDFKPGEPVLNWPERKRVAIGTARGLEYLHEHCNPKIIHRDVKAANVLLDEDFEPVVGDFGLAKLVDVQKTSVTTQVRGTMGHIAPEYLSTGKSSERTDVFGYGIMLLELVTGQRAIDFSRLEEEDDVLLLDHVKKLQREGQLGSIVDRNLNQNYDDEEVEMMIQIALLCTQSSPEDRPSMSEVVRMLEGEGLAERWEEWQQVEVTRRQEYERMQRRFDWGEDSVYNQEAIELSGGR</sequence>
<proteinExistence type="inferred from homology"/>
<keyword id="KW-0067">ATP-binding</keyword>
<keyword id="KW-1070">Brassinosteroid signaling pathway</keyword>
<keyword id="KW-1003">Cell membrane</keyword>
<keyword id="KW-0325">Glycoprotein</keyword>
<keyword id="KW-0418">Kinase</keyword>
<keyword id="KW-0433">Leucine-rich repeat</keyword>
<keyword id="KW-0472">Membrane</keyword>
<keyword id="KW-0547">Nucleotide-binding</keyword>
<keyword id="KW-0675">Receptor</keyword>
<keyword id="KW-1185">Reference proteome</keyword>
<keyword id="KW-0677">Repeat</keyword>
<keyword id="KW-0723">Serine/threonine-protein kinase</keyword>
<keyword id="KW-0732">Signal</keyword>
<keyword id="KW-0808">Transferase</keyword>
<keyword id="KW-0812">Transmembrane</keyword>
<keyword id="KW-1133">Transmembrane helix</keyword>
<protein>
    <recommendedName>
        <fullName evidence="6">LRR receptor kinase SERK2</fullName>
        <ecNumber evidence="6">2.7.11.1</ecNumber>
    </recommendedName>
    <alternativeName>
        <fullName evidence="6">BRI1-associated receptor kinase 1 homolog 5</fullName>
        <shortName evidence="6">OsBAK1-5</shortName>
    </alternativeName>
    <alternativeName>
        <fullName evidence="6">Somatic embryogenesis receptor kinase 4</fullName>
        <shortName evidence="5">OsSERK4</shortName>
    </alternativeName>
</protein>
<dbReference type="EC" id="2.7.11.1" evidence="6"/>
<dbReference type="EMBL" id="AP005533">
    <property type="protein sequence ID" value="BAD22198.1"/>
    <property type="molecule type" value="Genomic_DNA"/>
</dbReference>
<dbReference type="EMBL" id="AP008208">
    <property type="protein sequence ID" value="BAF08482.1"/>
    <property type="molecule type" value="Genomic_DNA"/>
</dbReference>
<dbReference type="EMBL" id="AP014958">
    <property type="protein sequence ID" value="BAS78137.1"/>
    <property type="molecule type" value="Genomic_DNA"/>
</dbReference>
<dbReference type="EMBL" id="CM000139">
    <property type="protein sequence ID" value="EAZ22603.1"/>
    <property type="molecule type" value="Genomic_DNA"/>
</dbReference>
<dbReference type="SMR" id="Q6K4T4"/>
<dbReference type="FunCoup" id="Q6K4T4">
    <property type="interactions" value="1001"/>
</dbReference>
<dbReference type="STRING" id="39947.Q6K4T4"/>
<dbReference type="GlyCosmos" id="Q6K4T4">
    <property type="glycosylation" value="6 sites, No reported glycans"/>
</dbReference>
<dbReference type="PaxDb" id="39947-Q6K4T4"/>
<dbReference type="EnsemblPlants" id="Os02t0283800-01">
    <property type="protein sequence ID" value="Os02t0283800-01"/>
    <property type="gene ID" value="Os02g0283800"/>
</dbReference>
<dbReference type="Gramene" id="Os02t0283800-01">
    <property type="protein sequence ID" value="Os02t0283800-01"/>
    <property type="gene ID" value="Os02g0283800"/>
</dbReference>
<dbReference type="KEGG" id="dosa:Os02g0283800"/>
<dbReference type="KEGG" id="osa:4329032"/>
<dbReference type="eggNOG" id="ENOG502QPJ2">
    <property type="taxonomic scope" value="Eukaryota"/>
</dbReference>
<dbReference type="HOGENOM" id="CLU_000288_92_6_1"/>
<dbReference type="InParanoid" id="Q6K4T4"/>
<dbReference type="OMA" id="NLTHHCE"/>
<dbReference type="OrthoDB" id="4062651at2759"/>
<dbReference type="Proteomes" id="UP000000763">
    <property type="component" value="Chromosome 2"/>
</dbReference>
<dbReference type="Proteomes" id="UP000007752">
    <property type="component" value="Chromosome 2"/>
</dbReference>
<dbReference type="Proteomes" id="UP000059680">
    <property type="component" value="Chromosome 2"/>
</dbReference>
<dbReference type="GO" id="GO:0005886">
    <property type="term" value="C:plasma membrane"/>
    <property type="evidence" value="ECO:0007669"/>
    <property type="project" value="UniProtKB-SubCell"/>
</dbReference>
<dbReference type="GO" id="GO:0005524">
    <property type="term" value="F:ATP binding"/>
    <property type="evidence" value="ECO:0007669"/>
    <property type="project" value="UniProtKB-KW"/>
</dbReference>
<dbReference type="GO" id="GO:0106310">
    <property type="term" value="F:protein serine kinase activity"/>
    <property type="evidence" value="ECO:0007669"/>
    <property type="project" value="RHEA"/>
</dbReference>
<dbReference type="GO" id="GO:0004674">
    <property type="term" value="F:protein serine/threonine kinase activity"/>
    <property type="evidence" value="ECO:0007669"/>
    <property type="project" value="UniProtKB-KW"/>
</dbReference>
<dbReference type="GO" id="GO:0009742">
    <property type="term" value="P:brassinosteroid mediated signaling pathway"/>
    <property type="evidence" value="ECO:0007669"/>
    <property type="project" value="UniProtKB-KW"/>
</dbReference>
<dbReference type="CDD" id="cd12087">
    <property type="entry name" value="TM_EGFR-like"/>
    <property type="match status" value="1"/>
</dbReference>
<dbReference type="FunFam" id="3.80.10.10:FF:000150">
    <property type="entry name" value="Putative LRR receptor-like serine/threonine-protein kinase"/>
    <property type="match status" value="1"/>
</dbReference>
<dbReference type="FunFam" id="3.30.200.20:FF:000015">
    <property type="entry name" value="Somatic embryogenesis receptor kinase 1"/>
    <property type="match status" value="1"/>
</dbReference>
<dbReference type="FunFam" id="1.10.510.10:FF:000016">
    <property type="entry name" value="Somatic embryogenesis receptor-like kinase 1"/>
    <property type="match status" value="1"/>
</dbReference>
<dbReference type="Gene3D" id="3.30.200.20">
    <property type="entry name" value="Phosphorylase Kinase, domain 1"/>
    <property type="match status" value="1"/>
</dbReference>
<dbReference type="Gene3D" id="3.80.10.10">
    <property type="entry name" value="Ribonuclease Inhibitor"/>
    <property type="match status" value="1"/>
</dbReference>
<dbReference type="Gene3D" id="1.10.510.10">
    <property type="entry name" value="Transferase(Phosphotransferase) domain 1"/>
    <property type="match status" value="1"/>
</dbReference>
<dbReference type="InterPro" id="IPR011009">
    <property type="entry name" value="Kinase-like_dom_sf"/>
</dbReference>
<dbReference type="InterPro" id="IPR001611">
    <property type="entry name" value="Leu-rich_rpt"/>
</dbReference>
<dbReference type="InterPro" id="IPR032675">
    <property type="entry name" value="LRR_dom_sf"/>
</dbReference>
<dbReference type="InterPro" id="IPR013210">
    <property type="entry name" value="LRR_N_plant-typ"/>
</dbReference>
<dbReference type="InterPro" id="IPR051824">
    <property type="entry name" value="LRR_Rcpt-Like_S/T_Kinase"/>
</dbReference>
<dbReference type="InterPro" id="IPR000719">
    <property type="entry name" value="Prot_kinase_dom"/>
</dbReference>
<dbReference type="InterPro" id="IPR017441">
    <property type="entry name" value="Protein_kinase_ATP_BS"/>
</dbReference>
<dbReference type="InterPro" id="IPR001245">
    <property type="entry name" value="Ser-Thr/Tyr_kinase_cat_dom"/>
</dbReference>
<dbReference type="InterPro" id="IPR008271">
    <property type="entry name" value="Ser/Thr_kinase_AS"/>
</dbReference>
<dbReference type="PANTHER" id="PTHR48006">
    <property type="entry name" value="LEUCINE-RICH REPEAT-CONTAINING PROTEIN DDB_G0281931-RELATED"/>
    <property type="match status" value="1"/>
</dbReference>
<dbReference type="PANTHER" id="PTHR48006:SF102">
    <property type="entry name" value="LEUCINE-RICH REPEAT-CONTAINING PROTEIN DDB_G0281931-RELATED"/>
    <property type="match status" value="1"/>
</dbReference>
<dbReference type="Pfam" id="PF00560">
    <property type="entry name" value="LRR_1"/>
    <property type="match status" value="3"/>
</dbReference>
<dbReference type="Pfam" id="PF08263">
    <property type="entry name" value="LRRNT_2"/>
    <property type="match status" value="1"/>
</dbReference>
<dbReference type="Pfam" id="PF07714">
    <property type="entry name" value="PK_Tyr_Ser-Thr"/>
    <property type="match status" value="1"/>
</dbReference>
<dbReference type="SMART" id="SM00220">
    <property type="entry name" value="S_TKc"/>
    <property type="match status" value="1"/>
</dbReference>
<dbReference type="SUPFAM" id="SSF52058">
    <property type="entry name" value="L domain-like"/>
    <property type="match status" value="1"/>
</dbReference>
<dbReference type="SUPFAM" id="SSF56112">
    <property type="entry name" value="Protein kinase-like (PK-like)"/>
    <property type="match status" value="1"/>
</dbReference>
<dbReference type="PROSITE" id="PS00107">
    <property type="entry name" value="PROTEIN_KINASE_ATP"/>
    <property type="match status" value="1"/>
</dbReference>
<dbReference type="PROSITE" id="PS50011">
    <property type="entry name" value="PROTEIN_KINASE_DOM"/>
    <property type="match status" value="1"/>
</dbReference>
<dbReference type="PROSITE" id="PS00108">
    <property type="entry name" value="PROTEIN_KINASE_ST"/>
    <property type="match status" value="1"/>
</dbReference>
<comment type="function">
    <text evidence="4">May be involved in the regulation of plant growth through the brassinosteroid (BR) signaling pathway.</text>
</comment>
<comment type="catalytic activity">
    <reaction evidence="6">
        <text>L-seryl-[protein] + ATP = O-phospho-L-seryl-[protein] + ADP + H(+)</text>
        <dbReference type="Rhea" id="RHEA:17989"/>
        <dbReference type="Rhea" id="RHEA-COMP:9863"/>
        <dbReference type="Rhea" id="RHEA-COMP:11604"/>
        <dbReference type="ChEBI" id="CHEBI:15378"/>
        <dbReference type="ChEBI" id="CHEBI:29999"/>
        <dbReference type="ChEBI" id="CHEBI:30616"/>
        <dbReference type="ChEBI" id="CHEBI:83421"/>
        <dbReference type="ChEBI" id="CHEBI:456216"/>
        <dbReference type="EC" id="2.7.11.1"/>
    </reaction>
</comment>
<comment type="catalytic activity">
    <reaction evidence="6">
        <text>L-threonyl-[protein] + ATP = O-phospho-L-threonyl-[protein] + ADP + H(+)</text>
        <dbReference type="Rhea" id="RHEA:46608"/>
        <dbReference type="Rhea" id="RHEA-COMP:11060"/>
        <dbReference type="Rhea" id="RHEA-COMP:11605"/>
        <dbReference type="ChEBI" id="CHEBI:15378"/>
        <dbReference type="ChEBI" id="CHEBI:30013"/>
        <dbReference type="ChEBI" id="CHEBI:30616"/>
        <dbReference type="ChEBI" id="CHEBI:61977"/>
        <dbReference type="ChEBI" id="CHEBI:456216"/>
        <dbReference type="EC" id="2.7.11.1"/>
    </reaction>
</comment>
<comment type="subcellular location">
    <subcellularLocation>
        <location evidence="6">Cell membrane</location>
        <topology evidence="1">Single-pass membrane protein</topology>
    </subcellularLocation>
</comment>
<comment type="similarity">
    <text evidence="2">Belongs to the protein kinase superfamily. Ser/Thr protein kinase family.</text>
</comment>
<gene>
    <name evidence="5" type="primary">SERK4</name>
    <name evidence="8" type="ordered locus">Os02g0283800</name>
    <name evidence="6" type="ordered locus">LOC_Os02g18320</name>
    <name evidence="9" type="ORF">OsJ_06271</name>
    <name evidence="7" type="ORF">OSJNBa0018M09.11</name>
</gene>
<organism>
    <name type="scientific">Oryza sativa subsp. japonica</name>
    <name type="common">Rice</name>
    <dbReference type="NCBI Taxonomy" id="39947"/>
    <lineage>
        <taxon>Eukaryota</taxon>
        <taxon>Viridiplantae</taxon>
        <taxon>Streptophyta</taxon>
        <taxon>Embryophyta</taxon>
        <taxon>Tracheophyta</taxon>
        <taxon>Spermatophyta</taxon>
        <taxon>Magnoliopsida</taxon>
        <taxon>Liliopsida</taxon>
        <taxon>Poales</taxon>
        <taxon>Poaceae</taxon>
        <taxon>BOP clade</taxon>
        <taxon>Oryzoideae</taxon>
        <taxon>Oryzeae</taxon>
        <taxon>Oryzinae</taxon>
        <taxon>Oryza</taxon>
        <taxon>Oryza sativa</taxon>
    </lineage>
</organism>
<reference key="1">
    <citation type="journal article" date="2005" name="Nature">
        <title>The map-based sequence of the rice genome.</title>
        <authorList>
            <consortium name="International rice genome sequencing project (IRGSP)"/>
        </authorList>
    </citation>
    <scope>NUCLEOTIDE SEQUENCE [LARGE SCALE GENOMIC DNA]</scope>
    <source>
        <strain>cv. Nipponbare</strain>
    </source>
</reference>
<reference key="2">
    <citation type="journal article" date="2008" name="Nucleic Acids Res.">
        <title>The rice annotation project database (RAP-DB): 2008 update.</title>
        <authorList>
            <consortium name="The rice annotation project (RAP)"/>
        </authorList>
    </citation>
    <scope>GENOME REANNOTATION</scope>
    <source>
        <strain>cv. Nipponbare</strain>
    </source>
</reference>
<reference key="3">
    <citation type="journal article" date="2013" name="Rice">
        <title>Improvement of the Oryza sativa Nipponbare reference genome using next generation sequence and optical map data.</title>
        <authorList>
            <person name="Kawahara Y."/>
            <person name="de la Bastide M."/>
            <person name="Hamilton J.P."/>
            <person name="Kanamori H."/>
            <person name="McCombie W.R."/>
            <person name="Ouyang S."/>
            <person name="Schwartz D.C."/>
            <person name="Tanaka T."/>
            <person name="Wu J."/>
            <person name="Zhou S."/>
            <person name="Childs K.L."/>
            <person name="Davidson R.M."/>
            <person name="Lin H."/>
            <person name="Quesada-Ocampo L."/>
            <person name="Vaillancourt B."/>
            <person name="Sakai H."/>
            <person name="Lee S.S."/>
            <person name="Kim J."/>
            <person name="Numa H."/>
            <person name="Itoh T."/>
            <person name="Buell C.R."/>
            <person name="Matsumoto T."/>
        </authorList>
    </citation>
    <scope>GENOME REANNOTATION</scope>
    <source>
        <strain>cv. Nipponbare</strain>
    </source>
</reference>
<reference key="4">
    <citation type="journal article" date="2005" name="PLoS Biol.">
        <title>The genomes of Oryza sativa: a history of duplications.</title>
        <authorList>
            <person name="Yu J."/>
            <person name="Wang J."/>
            <person name="Lin W."/>
            <person name="Li S."/>
            <person name="Li H."/>
            <person name="Zhou J."/>
            <person name="Ni P."/>
            <person name="Dong W."/>
            <person name="Hu S."/>
            <person name="Zeng C."/>
            <person name="Zhang J."/>
            <person name="Zhang Y."/>
            <person name="Li R."/>
            <person name="Xu Z."/>
            <person name="Li S."/>
            <person name="Li X."/>
            <person name="Zheng H."/>
            <person name="Cong L."/>
            <person name="Lin L."/>
            <person name="Yin J."/>
            <person name="Geng J."/>
            <person name="Li G."/>
            <person name="Shi J."/>
            <person name="Liu J."/>
            <person name="Lv H."/>
            <person name="Li J."/>
            <person name="Wang J."/>
            <person name="Deng Y."/>
            <person name="Ran L."/>
            <person name="Shi X."/>
            <person name="Wang X."/>
            <person name="Wu Q."/>
            <person name="Li C."/>
            <person name="Ren X."/>
            <person name="Wang J."/>
            <person name="Wang X."/>
            <person name="Li D."/>
            <person name="Liu D."/>
            <person name="Zhang X."/>
            <person name="Ji Z."/>
            <person name="Zhao W."/>
            <person name="Sun Y."/>
            <person name="Zhang Z."/>
            <person name="Bao J."/>
            <person name="Han Y."/>
            <person name="Dong L."/>
            <person name="Ji J."/>
            <person name="Chen P."/>
            <person name="Wu S."/>
            <person name="Liu J."/>
            <person name="Xiao Y."/>
            <person name="Bu D."/>
            <person name="Tan J."/>
            <person name="Yang L."/>
            <person name="Ye C."/>
            <person name="Zhang J."/>
            <person name="Xu J."/>
            <person name="Zhou Y."/>
            <person name="Yu Y."/>
            <person name="Zhang B."/>
            <person name="Zhuang S."/>
            <person name="Wei H."/>
            <person name="Liu B."/>
            <person name="Lei M."/>
            <person name="Yu H."/>
            <person name="Li Y."/>
            <person name="Xu H."/>
            <person name="Wei S."/>
            <person name="He X."/>
            <person name="Fang L."/>
            <person name="Zhang Z."/>
            <person name="Zhang Y."/>
            <person name="Huang X."/>
            <person name="Su Z."/>
            <person name="Tong W."/>
            <person name="Li J."/>
            <person name="Tong Z."/>
            <person name="Li S."/>
            <person name="Ye J."/>
            <person name="Wang L."/>
            <person name="Fang L."/>
            <person name="Lei T."/>
            <person name="Chen C.-S."/>
            <person name="Chen H.-C."/>
            <person name="Xu Z."/>
            <person name="Li H."/>
            <person name="Huang H."/>
            <person name="Zhang F."/>
            <person name="Xu H."/>
            <person name="Li N."/>
            <person name="Zhao C."/>
            <person name="Li S."/>
            <person name="Dong L."/>
            <person name="Huang Y."/>
            <person name="Li L."/>
            <person name="Xi Y."/>
            <person name="Qi Q."/>
            <person name="Li W."/>
            <person name="Zhang B."/>
            <person name="Hu W."/>
            <person name="Zhang Y."/>
            <person name="Tian X."/>
            <person name="Jiao Y."/>
            <person name="Liang X."/>
            <person name="Jin J."/>
            <person name="Gao L."/>
            <person name="Zheng W."/>
            <person name="Hao B."/>
            <person name="Liu S.-M."/>
            <person name="Wang W."/>
            <person name="Yuan L."/>
            <person name="Cao M."/>
            <person name="McDermott J."/>
            <person name="Samudrala R."/>
            <person name="Wang J."/>
            <person name="Wong G.K.-S."/>
            <person name="Yang H."/>
        </authorList>
    </citation>
    <scope>NUCLEOTIDE SEQUENCE [LARGE SCALE GENOMIC DNA]</scope>
    <source>
        <strain>cv. Nipponbare</strain>
    </source>
</reference>
<reference key="5">
    <citation type="journal article" date="2009" name="Plant Biotechnol. J.">
        <title>Engineering OsBAK1 gene as a molecular tool to improve rice architecture for high yield.</title>
        <authorList>
            <person name="Li D."/>
            <person name="Wang L."/>
            <person name="Wang M."/>
            <person name="Xu Y.Y."/>
            <person name="Luo W."/>
            <person name="Liu Y.J."/>
            <person name="Xu Z.H."/>
            <person name="Li J."/>
            <person name="Chong K."/>
        </authorList>
    </citation>
    <scope>FUNCTION</scope>
    <source>
        <strain>cv. Zhonghua 11</strain>
    </source>
</reference>